<reference key="1">
    <citation type="journal article" date="2011" name="PLoS ONE">
        <title>Distinct steps of neural induction revealed by Asterix, Obelix and TrkC, genes induced by different signals from the organizer.</title>
        <authorList>
            <person name="Pinho S."/>
            <person name="Simonsson P.R."/>
            <person name="Trevers K.E."/>
            <person name="Stower M.J."/>
            <person name="Sherlock W.T."/>
            <person name="Khan M."/>
            <person name="Streit A."/>
            <person name="Sheng G."/>
            <person name="Stern C.D."/>
        </authorList>
    </citation>
    <scope>NUCLEOTIDE SEQUENCE [MRNA]</scope>
    <scope>SUBCELLULAR LOCATION</scope>
    <scope>DEVELOPMENTAL STAGE</scope>
</reference>
<name>EIF1A_CHICK</name>
<comment type="function">
    <text evidence="1">May play a role into cellular response to oxidative stress. May decrease cell proliferation (By similarity).</text>
</comment>
<comment type="subcellular location">
    <subcellularLocation>
        <location evidence="4">Nucleus</location>
    </subcellularLocation>
</comment>
<comment type="developmental stage">
    <text evidence="4">Expressed in the early neural plate of embryos. Expressed at the mid- to late-primitive-streak at stage 3. Expressed at the neuronal plate including streams of neural creast cells until at least stage 14.</text>
</comment>
<comment type="similarity">
    <text evidence="5">Belongs to the EIF1AD family.</text>
</comment>
<sequence length="188" mass="21235">MSRATKRKHVTREVLEEHVVPAPQQRIVRVLGSPGNNLHEVETADGSRFLASMPPRFRHHVWIKRGDFLLVDPIEEGAKVKAEMALVLLRPHVRFLQRQGLWPTAFAASPDRTPQESDGDSELFVNTNRATIETDTEEEEEDGGDTESSEEEEEDREEPLEDRPEDRPEDCADVGSAAQRRSTIETGT</sequence>
<accession>Q6K1L7</accession>
<evidence type="ECO:0000250" key="1"/>
<evidence type="ECO:0000255" key="2">
    <source>
        <dbReference type="PROSITE-ProRule" id="PRU00181"/>
    </source>
</evidence>
<evidence type="ECO:0000256" key="3">
    <source>
        <dbReference type="SAM" id="MobiDB-lite"/>
    </source>
</evidence>
<evidence type="ECO:0000269" key="4">
    <source>
    </source>
</evidence>
<evidence type="ECO:0000305" key="5"/>
<dbReference type="EMBL" id="AY103477">
    <property type="protein sequence ID" value="AAM70512.1"/>
    <property type="molecule type" value="mRNA"/>
</dbReference>
<dbReference type="RefSeq" id="NP_001001612.1">
    <property type="nucleotide sequence ID" value="NM_001001612.1"/>
</dbReference>
<dbReference type="SMR" id="Q6K1L7"/>
<dbReference type="FunCoup" id="Q6K1L7">
    <property type="interactions" value="1564"/>
</dbReference>
<dbReference type="GeneID" id="414740"/>
<dbReference type="CTD" id="84285"/>
<dbReference type="InParanoid" id="Q6K1L7"/>
<dbReference type="PhylomeDB" id="Q6K1L7"/>
<dbReference type="PRO" id="PR:Q6K1L7"/>
<dbReference type="Proteomes" id="UP000000539">
    <property type="component" value="Unassembled WGS sequence"/>
</dbReference>
<dbReference type="GO" id="GO:0005634">
    <property type="term" value="C:nucleus"/>
    <property type="evidence" value="ECO:0000318"/>
    <property type="project" value="GO_Central"/>
</dbReference>
<dbReference type="GO" id="GO:0003723">
    <property type="term" value="F:RNA binding"/>
    <property type="evidence" value="ECO:0007669"/>
    <property type="project" value="UniProtKB-KW"/>
</dbReference>
<dbReference type="GO" id="GO:0003743">
    <property type="term" value="F:translation initiation factor activity"/>
    <property type="evidence" value="ECO:0007669"/>
    <property type="project" value="InterPro"/>
</dbReference>
<dbReference type="CDD" id="cd05792">
    <property type="entry name" value="S1_eIF1AD_like"/>
    <property type="match status" value="1"/>
</dbReference>
<dbReference type="Gene3D" id="1.10.1200.180">
    <property type="match status" value="1"/>
</dbReference>
<dbReference type="Gene3D" id="2.40.50.140">
    <property type="entry name" value="Nucleic acid-binding proteins"/>
    <property type="match status" value="1"/>
</dbReference>
<dbReference type="InterPro" id="IPR039294">
    <property type="entry name" value="EIF1AD"/>
</dbReference>
<dbReference type="InterPro" id="IPR012340">
    <property type="entry name" value="NA-bd_OB-fold"/>
</dbReference>
<dbReference type="InterPro" id="IPR006196">
    <property type="entry name" value="RNA-binding_domain_S1_IF1"/>
</dbReference>
<dbReference type="InterPro" id="IPR001253">
    <property type="entry name" value="TIF_eIF-1A"/>
</dbReference>
<dbReference type="PANTHER" id="PTHR21641:SF0">
    <property type="entry name" value="RNA-BINDING PROTEIN EIF1AD-RELATED"/>
    <property type="match status" value="1"/>
</dbReference>
<dbReference type="PANTHER" id="PTHR21641">
    <property type="entry name" value="TRANSLATION INITIATION FACTOR-RELATED"/>
    <property type="match status" value="1"/>
</dbReference>
<dbReference type="Pfam" id="PF01176">
    <property type="entry name" value="eIF-1a"/>
    <property type="match status" value="1"/>
</dbReference>
<dbReference type="SMART" id="SM00652">
    <property type="entry name" value="eIF1a"/>
    <property type="match status" value="1"/>
</dbReference>
<dbReference type="SUPFAM" id="SSF50249">
    <property type="entry name" value="Nucleic acid-binding proteins"/>
    <property type="match status" value="1"/>
</dbReference>
<dbReference type="PROSITE" id="PS50832">
    <property type="entry name" value="S1_IF1_TYPE"/>
    <property type="match status" value="1"/>
</dbReference>
<organism>
    <name type="scientific">Gallus gallus</name>
    <name type="common">Chicken</name>
    <dbReference type="NCBI Taxonomy" id="9031"/>
    <lineage>
        <taxon>Eukaryota</taxon>
        <taxon>Metazoa</taxon>
        <taxon>Chordata</taxon>
        <taxon>Craniata</taxon>
        <taxon>Vertebrata</taxon>
        <taxon>Euteleostomi</taxon>
        <taxon>Archelosauria</taxon>
        <taxon>Archosauria</taxon>
        <taxon>Dinosauria</taxon>
        <taxon>Saurischia</taxon>
        <taxon>Theropoda</taxon>
        <taxon>Coelurosauria</taxon>
        <taxon>Aves</taxon>
        <taxon>Neognathae</taxon>
        <taxon>Galloanserae</taxon>
        <taxon>Galliformes</taxon>
        <taxon>Phasianidae</taxon>
        <taxon>Phasianinae</taxon>
        <taxon>Gallus</taxon>
    </lineage>
</organism>
<protein>
    <recommendedName>
        <fullName>Probable RNA-binding protein EIF1AD</fullName>
    </recommendedName>
    <alternativeName>
        <fullName>Eukaryotic translation initiation factor 1A domain-containing protein</fullName>
    </alternativeName>
    <alternativeName>
        <fullName>Protein Obelix</fullName>
    </alternativeName>
</protein>
<feature type="chain" id="PRO_0000314156" description="Probable RNA-binding protein EIF1AD">
    <location>
        <begin position="1"/>
        <end position="188"/>
    </location>
</feature>
<feature type="domain" description="S1-like" evidence="2">
    <location>
        <begin position="14"/>
        <end position="92"/>
    </location>
</feature>
<feature type="region of interest" description="Disordered" evidence="3">
    <location>
        <begin position="107"/>
        <end position="188"/>
    </location>
</feature>
<feature type="compositionally biased region" description="Acidic residues" evidence="3">
    <location>
        <begin position="134"/>
        <end position="160"/>
    </location>
</feature>
<feature type="compositionally biased region" description="Basic and acidic residues" evidence="3">
    <location>
        <begin position="161"/>
        <end position="170"/>
    </location>
</feature>
<feature type="compositionally biased region" description="Polar residues" evidence="3">
    <location>
        <begin position="179"/>
        <end position="188"/>
    </location>
</feature>
<gene>
    <name type="primary">eif1ad</name>
</gene>
<proteinExistence type="evidence at transcript level"/>
<keyword id="KW-0539">Nucleus</keyword>
<keyword id="KW-1185">Reference proteome</keyword>
<keyword id="KW-0694">RNA-binding</keyword>